<proteinExistence type="evidence at protein level"/>
<protein>
    <recommendedName>
        <fullName>Alpha-2-antiplasmin</fullName>
        <shortName>Alpha-2-AP</shortName>
    </recommendedName>
    <alternativeName>
        <fullName>Alpha-2-plasmin inhibitor</fullName>
        <shortName>Alpha-2-PI</shortName>
    </alternativeName>
    <alternativeName>
        <fullName>Serpin F2</fullName>
    </alternativeName>
</protein>
<comment type="function">
    <text evidence="1">Serine protease inhibitor. The major targets of this inhibitor are plasmin and trypsin, but it also inactivates matriptase-3/TMPRSS7 and chymotrypsin (By similarity).</text>
</comment>
<comment type="subunit">
    <text evidence="1">Forms protease inhibiting heterodimer with TMPRSS7.</text>
</comment>
<comment type="subcellular location">
    <subcellularLocation>
        <location>Secreted</location>
    </subcellularLocation>
</comment>
<comment type="tissue specificity">
    <text>Expressed by the liver and secreted in plasma.</text>
</comment>
<comment type="PTM">
    <text evidence="2">Proteolytically cleaved at Pro-31 by both the prolyl endopeptidase FAP form and antiplasmin-cleaving enzyme FAP soluble form to generate mature alpha-2-antiplasmin.</text>
</comment>
<comment type="similarity">
    <text evidence="6">Belongs to the serpin family.</text>
</comment>
<reference key="1">
    <citation type="journal article" date="1994" name="FEBS Lett.">
        <title>Primary structure of bovine alpha 2-antiplasmin.</title>
        <authorList>
            <person name="Christensen S."/>
            <person name="Berglund L."/>
            <person name="Sottrup-Jensen L."/>
        </authorList>
    </citation>
    <scope>NUCLEOTIDE SEQUENCE [MRNA]</scope>
    <scope>DISULFIDE BOND</scope>
    <scope>GLYCOSYLATION AT ASN-127; ASN-249; ASN-296; ASN-310 AND ASN-317</scope>
</reference>
<reference key="2">
    <citation type="journal article" date="1992" name="FEBS Lett.">
        <title>Bovine alpha 2-antiplasmin. N-terminal and reactive site sequence.</title>
        <authorList>
            <person name="Christensen S."/>
            <person name="Sottrup-Jensen L."/>
        </authorList>
    </citation>
    <scope>PROTEIN SEQUENCE OF 23-45 AND 374-410</scope>
    <source>
        <tissue>Plasma</tissue>
    </source>
</reference>
<name>A2AP_BOVIN</name>
<organism>
    <name type="scientific">Bos taurus</name>
    <name type="common">Bovine</name>
    <dbReference type="NCBI Taxonomy" id="9913"/>
    <lineage>
        <taxon>Eukaryota</taxon>
        <taxon>Metazoa</taxon>
        <taxon>Chordata</taxon>
        <taxon>Craniata</taxon>
        <taxon>Vertebrata</taxon>
        <taxon>Euteleostomi</taxon>
        <taxon>Mammalia</taxon>
        <taxon>Eutheria</taxon>
        <taxon>Laurasiatheria</taxon>
        <taxon>Artiodactyla</taxon>
        <taxon>Ruminantia</taxon>
        <taxon>Pecora</taxon>
        <taxon>Bovidae</taxon>
        <taxon>Bovinae</taxon>
        <taxon>Bos</taxon>
    </lineage>
</organism>
<accession>P28800</accession>
<evidence type="ECO:0000250" key="1"/>
<evidence type="ECO:0000250" key="2">
    <source>
        <dbReference type="UniProtKB" id="P08697"/>
    </source>
</evidence>
<evidence type="ECO:0000256" key="3">
    <source>
        <dbReference type="SAM" id="MobiDB-lite"/>
    </source>
</evidence>
<evidence type="ECO:0000269" key="4">
    <source>
    </source>
</evidence>
<evidence type="ECO:0000269" key="5">
    <source>
    </source>
</evidence>
<evidence type="ECO:0000305" key="6"/>
<feature type="signal peptide" evidence="4">
    <location>
        <begin position="1"/>
        <end position="22"/>
    </location>
</feature>
<feature type="propeptide" id="PRO_0000430667" evidence="4">
    <location>
        <begin position="23"/>
        <end position="40"/>
    </location>
</feature>
<feature type="chain" id="PRO_0000032510" description="Alpha-2-antiplasmin">
    <location>
        <begin position="41"/>
        <end position="492"/>
    </location>
</feature>
<feature type="region of interest" description="Disordered" evidence="3">
    <location>
        <begin position="56"/>
        <end position="76"/>
    </location>
</feature>
<feature type="region of interest" description="Disordered" evidence="3">
    <location>
        <begin position="433"/>
        <end position="492"/>
    </location>
</feature>
<feature type="compositionally biased region" description="Basic and acidic residues" evidence="3">
    <location>
        <begin position="443"/>
        <end position="475"/>
    </location>
</feature>
<feature type="site" description="Cleavage; by prolyl endopeptidase FAP, antiplasmin-cleaving enzyme FAP soluble form" evidence="2">
    <location>
        <begin position="40"/>
        <end position="41"/>
    </location>
</feature>
<feature type="site" description="Reactive bond for plasmin">
    <location>
        <begin position="404"/>
        <end position="405"/>
    </location>
</feature>
<feature type="site" description="Reactive bond for chymotrypsin">
    <location>
        <begin position="405"/>
        <end position="406"/>
    </location>
</feature>
<feature type="modified residue" description="Sulfotyrosine" evidence="1">
    <location>
        <position position="485"/>
    </location>
</feature>
<feature type="glycosylation site" description="N-linked (GlcNAc...) asparagine" evidence="5">
    <location>
        <position position="127"/>
    </location>
</feature>
<feature type="glycosylation site" description="N-linked (GlcNAc...) asparagine" evidence="5">
    <location>
        <position position="249"/>
    </location>
</feature>
<feature type="glycosylation site" description="N-linked (GlcNAc...) asparagine" evidence="5">
    <location>
        <position position="296"/>
    </location>
</feature>
<feature type="glycosylation site" description="N-linked (GlcNAc...) asparagine" evidence="5">
    <location>
        <position position="310"/>
    </location>
</feature>
<feature type="glycosylation site" description="N-linked (GlcNAc...) asparagine" evidence="5">
    <location>
        <position position="317"/>
    </location>
</feature>
<feature type="disulfide bond" evidence="5">
    <location>
        <begin position="71"/>
        <end position="144"/>
    </location>
</feature>
<feature type="sequence conflict" description="In Ref. 2; AA sequence." evidence="6" ref="2">
    <original>T</original>
    <variation>Q</variation>
    <location>
        <position position="28"/>
    </location>
</feature>
<feature type="sequence conflict" description="In Ref. 2; AA sequence." evidence="6" ref="2">
    <original>Q</original>
    <variation>P</variation>
    <location>
        <position position="40"/>
    </location>
</feature>
<feature type="sequence conflict" description="In Ref. 2; AA sequence." evidence="6" ref="2">
    <original>Q</original>
    <variation>E</variation>
    <location>
        <position position="43"/>
    </location>
</feature>
<dbReference type="EMBL" id="X78436">
    <property type="protein sequence ID" value="CAA55200.1"/>
    <property type="molecule type" value="mRNA"/>
</dbReference>
<dbReference type="PIR" id="S43977">
    <property type="entry name" value="S43977"/>
</dbReference>
<dbReference type="RefSeq" id="NP_777095.1">
    <property type="nucleotide sequence ID" value="NM_174670.2"/>
</dbReference>
<dbReference type="RefSeq" id="XP_024835406.1">
    <property type="nucleotide sequence ID" value="XM_024979638.2"/>
</dbReference>
<dbReference type="SMR" id="P28800"/>
<dbReference type="FunCoup" id="P28800">
    <property type="interactions" value="265"/>
</dbReference>
<dbReference type="STRING" id="9913.ENSBTAP00000027793"/>
<dbReference type="MEROPS" id="I04.023"/>
<dbReference type="GlyCosmos" id="P28800">
    <property type="glycosylation" value="5 sites, No reported glycans"/>
</dbReference>
<dbReference type="GlyGen" id="P28800">
    <property type="glycosylation" value="5 sites"/>
</dbReference>
<dbReference type="iPTMnet" id="P28800"/>
<dbReference type="PaxDb" id="9913-ENSBTAP00000027793"/>
<dbReference type="PeptideAtlas" id="P28800"/>
<dbReference type="Ensembl" id="ENSBTAT00000027793.5">
    <property type="protein sequence ID" value="ENSBTAP00000027793.3"/>
    <property type="gene ID" value="ENSBTAG00000020859.5"/>
</dbReference>
<dbReference type="GeneID" id="282522"/>
<dbReference type="KEGG" id="bta:282522"/>
<dbReference type="CTD" id="5345"/>
<dbReference type="VEuPathDB" id="HostDB:ENSBTAG00000020859"/>
<dbReference type="VGNC" id="VGNC:34479">
    <property type="gene designation" value="SERPINF2"/>
</dbReference>
<dbReference type="eggNOG" id="KOG2392">
    <property type="taxonomic scope" value="Eukaryota"/>
</dbReference>
<dbReference type="GeneTree" id="ENSGT00940000158386"/>
<dbReference type="HOGENOM" id="CLU_023330_3_2_1"/>
<dbReference type="InParanoid" id="P28800"/>
<dbReference type="OMA" id="SCEMTWK"/>
<dbReference type="OrthoDB" id="9947020at2759"/>
<dbReference type="TreeFam" id="TF317350"/>
<dbReference type="Reactome" id="R-BTA-114608">
    <property type="pathway name" value="Platelet degranulation"/>
</dbReference>
<dbReference type="Reactome" id="R-BTA-75205">
    <property type="pathway name" value="Dissolution of Fibrin Clot"/>
</dbReference>
<dbReference type="Proteomes" id="UP000009136">
    <property type="component" value="Chromosome 19"/>
</dbReference>
<dbReference type="Bgee" id="ENSBTAG00000020859">
    <property type="expression patterns" value="Expressed in liver and 64 other cell types or tissues"/>
</dbReference>
<dbReference type="GO" id="GO:0005615">
    <property type="term" value="C:extracellular space"/>
    <property type="evidence" value="ECO:0000318"/>
    <property type="project" value="GO_Central"/>
</dbReference>
<dbReference type="GO" id="GO:0004867">
    <property type="term" value="F:serine-type endopeptidase inhibitor activity"/>
    <property type="evidence" value="ECO:0000318"/>
    <property type="project" value="GO_Central"/>
</dbReference>
<dbReference type="GO" id="GO:0006953">
    <property type="term" value="P:acute-phase response"/>
    <property type="evidence" value="ECO:0007669"/>
    <property type="project" value="UniProtKB-KW"/>
</dbReference>
<dbReference type="GO" id="GO:0051918">
    <property type="term" value="P:negative regulation of fibrinolysis"/>
    <property type="evidence" value="ECO:0007669"/>
    <property type="project" value="InterPro"/>
</dbReference>
<dbReference type="GO" id="GO:0050820">
    <property type="term" value="P:positive regulation of coagulation"/>
    <property type="evidence" value="ECO:0000318"/>
    <property type="project" value="GO_Central"/>
</dbReference>
<dbReference type="CDD" id="cd02053">
    <property type="entry name" value="serpinF2_A2AP"/>
    <property type="match status" value="1"/>
</dbReference>
<dbReference type="FunFam" id="3.30.497.10:FF:000003">
    <property type="entry name" value="Serpin family F member 1"/>
    <property type="match status" value="1"/>
</dbReference>
<dbReference type="Gene3D" id="2.30.39.10">
    <property type="entry name" value="Alpha-1-antitrypsin, domain 1"/>
    <property type="match status" value="1"/>
</dbReference>
<dbReference type="Gene3D" id="3.30.497.10">
    <property type="entry name" value="Antithrombin, subunit I, domain 2"/>
    <property type="match status" value="1"/>
</dbReference>
<dbReference type="InterPro" id="IPR033833">
    <property type="entry name" value="Alpha2AP_serpin_dom"/>
</dbReference>
<dbReference type="InterPro" id="IPR023795">
    <property type="entry name" value="Serpin_CS"/>
</dbReference>
<dbReference type="InterPro" id="IPR023796">
    <property type="entry name" value="Serpin_dom"/>
</dbReference>
<dbReference type="InterPro" id="IPR000215">
    <property type="entry name" value="Serpin_fam"/>
</dbReference>
<dbReference type="InterPro" id="IPR036186">
    <property type="entry name" value="Serpin_sf"/>
</dbReference>
<dbReference type="InterPro" id="IPR042178">
    <property type="entry name" value="Serpin_sf_1"/>
</dbReference>
<dbReference type="InterPro" id="IPR042185">
    <property type="entry name" value="Serpin_sf_2"/>
</dbReference>
<dbReference type="PANTHER" id="PTHR11461:SF20">
    <property type="entry name" value="ALPHA-2-ANTIPLASMIN"/>
    <property type="match status" value="1"/>
</dbReference>
<dbReference type="PANTHER" id="PTHR11461">
    <property type="entry name" value="SERINE PROTEASE INHIBITOR, SERPIN"/>
    <property type="match status" value="1"/>
</dbReference>
<dbReference type="Pfam" id="PF00079">
    <property type="entry name" value="Serpin"/>
    <property type="match status" value="1"/>
</dbReference>
<dbReference type="SMART" id="SM00093">
    <property type="entry name" value="SERPIN"/>
    <property type="match status" value="1"/>
</dbReference>
<dbReference type="SUPFAM" id="SSF56574">
    <property type="entry name" value="Serpins"/>
    <property type="match status" value="1"/>
</dbReference>
<dbReference type="PROSITE" id="PS00284">
    <property type="entry name" value="SERPIN"/>
    <property type="match status" value="1"/>
</dbReference>
<keyword id="KW-0011">Acute phase</keyword>
<keyword id="KW-0903">Direct protein sequencing</keyword>
<keyword id="KW-1015">Disulfide bond</keyword>
<keyword id="KW-0325">Glycoprotein</keyword>
<keyword id="KW-0646">Protease inhibitor</keyword>
<keyword id="KW-1185">Reference proteome</keyword>
<keyword id="KW-0964">Secreted</keyword>
<keyword id="KW-0722">Serine protease inhibitor</keyword>
<keyword id="KW-0732">Signal</keyword>
<keyword id="KW-0765">Sulfation</keyword>
<gene>
    <name type="primary">SERPINF2</name>
    <name type="synonym">PLI</name>
</gene>
<sequence length="492" mass="54711">MALLWGLLALILSCLSSLCSAQFSPVSTMEPLDLQLMDGQAQQKLPPLSLLKLDNQEPGGQIAPKKAPEDCKLSPTPEQTRRLARAMMTFTTDLFSLVAQSSTRPNLILSPLSVALALSHLALGAQNQTLQRLKEVLHADSGPCLPHLLSRLCQDLGPGAFRLAARMYLQKGFPIKEDFLEQSEQLFGAKPMSLTGMKGEDLANINRWVKEATEGKIEDFLSDLPDDTVLLLLNAIHFQGFWRSKFDPNLTQRGAFHLDEQFTVPVDMMQALTYPLHWFLLEQPEIQVAHFPFKNNMSFVVLMPTRFEWNASQVLANLTWDILHQPSLSERPTKVQLPKLHLKYQLDLVATLSQLGLQELFQAPDLRGISDERLVVSSVQHQSALELSEAGVQAAAATSTAMSRMSLSSFIVNRPFLFFILEDSTSLPLFVGSVRNPNPGAQPERKEQQDSPDGKDSFQDHKGLPRGDKPFDPDLKLGPPSEEDYAQPSSPK</sequence>